<accession>P19466</accession>
<organism>
    <name type="scientific">Bacillus subtilis (strain 168)</name>
    <dbReference type="NCBI Taxonomy" id="224308"/>
    <lineage>
        <taxon>Bacteria</taxon>
        <taxon>Bacillati</taxon>
        <taxon>Bacillota</taxon>
        <taxon>Bacilli</taxon>
        <taxon>Bacillales</taxon>
        <taxon>Bacillaceae</taxon>
        <taxon>Bacillus</taxon>
    </lineage>
</organism>
<evidence type="ECO:0000269" key="1">
    <source>
    </source>
</evidence>
<evidence type="ECO:0000269" key="2">
    <source>
    </source>
</evidence>
<evidence type="ECO:0000305" key="3"/>
<evidence type="ECO:0007829" key="4">
    <source>
        <dbReference type="PDB" id="3ZZQ"/>
    </source>
</evidence>
<sequence length="75" mass="8328">MNQKHSSDFVVIKAVEDGVNVIGLTRGTDTKFHHSEKLDKGEVIIAQFTEHTSAIKVRGEALIQTAYGEMKSEKK</sequence>
<reference key="1">
    <citation type="journal article" date="1990" name="Proc. Natl. Acad. Sci. U.S.A.">
        <title>The mtr locus is a two-gene operon required for transcription attenuation in the trp operon of Bacillus subtilis.</title>
        <authorList>
            <person name="Gollnick P."/>
            <person name="Ishino S."/>
            <person name="Kuroda M.I."/>
            <person name="Henner D.J."/>
            <person name="Yanofsky C."/>
        </authorList>
    </citation>
    <scope>NUCLEOTIDE SEQUENCE [GENOMIC DNA]</scope>
</reference>
<reference key="2">
    <citation type="journal article" date="1997" name="Nature">
        <title>The complete genome sequence of the Gram-positive bacterium Bacillus subtilis.</title>
        <authorList>
            <person name="Kunst F."/>
            <person name="Ogasawara N."/>
            <person name="Moszer I."/>
            <person name="Albertini A.M."/>
            <person name="Alloni G."/>
            <person name="Azevedo V."/>
            <person name="Bertero M.G."/>
            <person name="Bessieres P."/>
            <person name="Bolotin A."/>
            <person name="Borchert S."/>
            <person name="Borriss R."/>
            <person name="Boursier L."/>
            <person name="Brans A."/>
            <person name="Braun M."/>
            <person name="Brignell S.C."/>
            <person name="Bron S."/>
            <person name="Brouillet S."/>
            <person name="Bruschi C.V."/>
            <person name="Caldwell B."/>
            <person name="Capuano V."/>
            <person name="Carter N.M."/>
            <person name="Choi S.-K."/>
            <person name="Codani J.-J."/>
            <person name="Connerton I.F."/>
            <person name="Cummings N.J."/>
            <person name="Daniel R.A."/>
            <person name="Denizot F."/>
            <person name="Devine K.M."/>
            <person name="Duesterhoeft A."/>
            <person name="Ehrlich S.D."/>
            <person name="Emmerson P.T."/>
            <person name="Entian K.-D."/>
            <person name="Errington J."/>
            <person name="Fabret C."/>
            <person name="Ferrari E."/>
            <person name="Foulger D."/>
            <person name="Fritz C."/>
            <person name="Fujita M."/>
            <person name="Fujita Y."/>
            <person name="Fuma S."/>
            <person name="Galizzi A."/>
            <person name="Galleron N."/>
            <person name="Ghim S.-Y."/>
            <person name="Glaser P."/>
            <person name="Goffeau A."/>
            <person name="Golightly E.J."/>
            <person name="Grandi G."/>
            <person name="Guiseppi G."/>
            <person name="Guy B.J."/>
            <person name="Haga K."/>
            <person name="Haiech J."/>
            <person name="Harwood C.R."/>
            <person name="Henaut A."/>
            <person name="Hilbert H."/>
            <person name="Holsappel S."/>
            <person name="Hosono S."/>
            <person name="Hullo M.-F."/>
            <person name="Itaya M."/>
            <person name="Jones L.-M."/>
            <person name="Joris B."/>
            <person name="Karamata D."/>
            <person name="Kasahara Y."/>
            <person name="Klaerr-Blanchard M."/>
            <person name="Klein C."/>
            <person name="Kobayashi Y."/>
            <person name="Koetter P."/>
            <person name="Koningstein G."/>
            <person name="Krogh S."/>
            <person name="Kumano M."/>
            <person name="Kurita K."/>
            <person name="Lapidus A."/>
            <person name="Lardinois S."/>
            <person name="Lauber J."/>
            <person name="Lazarevic V."/>
            <person name="Lee S.-M."/>
            <person name="Levine A."/>
            <person name="Liu H."/>
            <person name="Masuda S."/>
            <person name="Mauel C."/>
            <person name="Medigue C."/>
            <person name="Medina N."/>
            <person name="Mellado R.P."/>
            <person name="Mizuno M."/>
            <person name="Moestl D."/>
            <person name="Nakai S."/>
            <person name="Noback M."/>
            <person name="Noone D."/>
            <person name="O'Reilly M."/>
            <person name="Ogawa K."/>
            <person name="Ogiwara A."/>
            <person name="Oudega B."/>
            <person name="Park S.-H."/>
            <person name="Parro V."/>
            <person name="Pohl T.M."/>
            <person name="Portetelle D."/>
            <person name="Porwollik S."/>
            <person name="Prescott A.M."/>
            <person name="Presecan E."/>
            <person name="Pujic P."/>
            <person name="Purnelle B."/>
            <person name="Rapoport G."/>
            <person name="Rey M."/>
            <person name="Reynolds S."/>
            <person name="Rieger M."/>
            <person name="Rivolta C."/>
            <person name="Rocha E."/>
            <person name="Roche B."/>
            <person name="Rose M."/>
            <person name="Sadaie Y."/>
            <person name="Sato T."/>
            <person name="Scanlan E."/>
            <person name="Schleich S."/>
            <person name="Schroeter R."/>
            <person name="Scoffone F."/>
            <person name="Sekiguchi J."/>
            <person name="Sekowska A."/>
            <person name="Seror S.J."/>
            <person name="Serror P."/>
            <person name="Shin B.-S."/>
            <person name="Soldo B."/>
            <person name="Sorokin A."/>
            <person name="Tacconi E."/>
            <person name="Takagi T."/>
            <person name="Takahashi H."/>
            <person name="Takemaru K."/>
            <person name="Takeuchi M."/>
            <person name="Tamakoshi A."/>
            <person name="Tanaka T."/>
            <person name="Terpstra P."/>
            <person name="Tognoni A."/>
            <person name="Tosato V."/>
            <person name="Uchiyama S."/>
            <person name="Vandenbol M."/>
            <person name="Vannier F."/>
            <person name="Vassarotti A."/>
            <person name="Viari A."/>
            <person name="Wambutt R."/>
            <person name="Wedler E."/>
            <person name="Wedler H."/>
            <person name="Weitzenegger T."/>
            <person name="Winters P."/>
            <person name="Wipat A."/>
            <person name="Yamamoto H."/>
            <person name="Yamane K."/>
            <person name="Yasumoto K."/>
            <person name="Yata K."/>
            <person name="Yoshida K."/>
            <person name="Yoshikawa H.-F."/>
            <person name="Zumstein E."/>
            <person name="Yoshikawa H."/>
            <person name="Danchin A."/>
        </authorList>
    </citation>
    <scope>NUCLEOTIDE SEQUENCE [LARGE SCALE GENOMIC DNA]</scope>
    <source>
        <strain>168</strain>
    </source>
</reference>
<reference key="3">
    <citation type="journal article" date="1992" name="J. Bacteriol.">
        <title>The mtrAB operon of Bacillus subtilis encodes GTP cyclohydrolase I (MtrA), an enzyme involved in folic acid biosynthesis, and MtrB, a regulator of tryptophan biosynthesis.</title>
        <authorList>
            <person name="Babitzke P."/>
            <person name="Gollnick P."/>
            <person name="Yanofsky C."/>
        </authorList>
    </citation>
    <scope>FUNCTION</scope>
</reference>
<reference key="4">
    <citation type="journal article" date="2008" name="J. Biol. Chem.">
        <title>Role of Bacillus subtilis RNase J1 endonuclease and 5'-exonuclease activities in trp leader RNA turnover.</title>
        <authorList>
            <person name="Deikus G."/>
            <person name="Condon C."/>
            <person name="Bechhofer D.H."/>
        </authorList>
    </citation>
    <scope>FUNCTION</scope>
</reference>
<reference key="5">
    <citation type="journal article" date="1995" name="Nature">
        <title>The structure of trp RNA-binding attenuation protein.</title>
        <authorList>
            <person name="Antson A.A."/>
            <person name="Otridge J."/>
            <person name="Brzozowski A.M."/>
            <person name="Dodson E.J."/>
            <person name="Dodson G.G."/>
            <person name="Wilson K.S."/>
            <person name="Smith T.M."/>
            <person name="Yan M."/>
            <person name="Kurecki T."/>
            <person name="Gollnick P."/>
        </authorList>
    </citation>
    <scope>X-RAY CRYSTALLOGRAPHY (1.8 ANGSTROMS)</scope>
</reference>
<reference key="6">
    <citation type="journal article" date="1994" name="J. Mol. Biol.">
        <title>11-fold symmetry of the trp RNA-binding attenuation protein (TRAP) from Bacillus subtilis determined by X-ray analysis.</title>
        <authorList>
            <person name="Antson A.A."/>
            <person name="Brzozowski A.M."/>
            <person name="Dodson E.J."/>
            <person name="Dauter Z."/>
            <person name="Wilson K.S."/>
            <person name="Kurecki T."/>
            <person name="Otridge J."/>
            <person name="Gollnick P."/>
        </authorList>
    </citation>
    <scope>X-RAY CRYSTALLOGRAPHY (2.9 ANGSTROMS)</scope>
</reference>
<gene>
    <name type="primary">mtrB</name>
    <name type="ordered locus">BSU22770</name>
</gene>
<feature type="chain" id="PRO_0000206028" description="Transcription attenuation protein MtrB">
    <location>
        <begin position="1"/>
        <end position="75"/>
    </location>
</feature>
<feature type="strand" evidence="4">
    <location>
        <begin position="9"/>
        <end position="16"/>
    </location>
</feature>
<feature type="strand" evidence="4">
    <location>
        <begin position="19"/>
        <end position="25"/>
    </location>
</feature>
<feature type="strand" evidence="4">
    <location>
        <begin position="27"/>
        <end position="29"/>
    </location>
</feature>
<feature type="strand" evidence="4">
    <location>
        <begin position="32"/>
        <end position="38"/>
    </location>
</feature>
<feature type="strand" evidence="4">
    <location>
        <begin position="43"/>
        <end position="47"/>
    </location>
</feature>
<feature type="strand" evidence="4">
    <location>
        <begin position="50"/>
        <end position="65"/>
    </location>
</feature>
<feature type="strand" evidence="4">
    <location>
        <begin position="68"/>
        <end position="70"/>
    </location>
</feature>
<dbReference type="EMBL" id="M37320">
    <property type="protein sequence ID" value="AAA22616.1"/>
    <property type="molecule type" value="Genomic_DNA"/>
</dbReference>
<dbReference type="EMBL" id="M80245">
    <property type="protein sequence ID" value="AAA20853.1"/>
    <property type="molecule type" value="Genomic_DNA"/>
</dbReference>
<dbReference type="EMBL" id="AL009126">
    <property type="protein sequence ID" value="CAB14193.1"/>
    <property type="molecule type" value="Genomic_DNA"/>
</dbReference>
<dbReference type="PIR" id="B38256">
    <property type="entry name" value="B38256"/>
</dbReference>
<dbReference type="RefSeq" id="NP_390158.1">
    <property type="nucleotide sequence ID" value="NC_000964.3"/>
</dbReference>
<dbReference type="RefSeq" id="WP_003230576.1">
    <property type="nucleotide sequence ID" value="NZ_OZ025638.1"/>
</dbReference>
<dbReference type="PDB" id="1WAP">
    <property type="method" value="X-ray"/>
    <property type="resolution" value="1.80 A"/>
    <property type="chains" value="A/B/C/D/E/F/G/H/I/J/K/L/M/N/O/P/Q/R/S/T/U/V=1-75"/>
</dbReference>
<dbReference type="PDB" id="3ZZQ">
    <property type="method" value="X-ray"/>
    <property type="resolution" value="1.75 A"/>
    <property type="chains" value="A/B/C/D/E/F=7-71"/>
</dbReference>
<dbReference type="PDB" id="4B27">
    <property type="method" value="X-ray"/>
    <property type="resolution" value="2.72 A"/>
    <property type="chains" value="A/B/C/D/E/F=1-75"/>
</dbReference>
<dbReference type="PDBsum" id="1WAP"/>
<dbReference type="PDBsum" id="3ZZQ"/>
<dbReference type="PDBsum" id="4B27"/>
<dbReference type="SMR" id="P19466"/>
<dbReference type="FunCoup" id="P19466">
    <property type="interactions" value="20"/>
</dbReference>
<dbReference type="STRING" id="224308.BSU22770"/>
<dbReference type="PaxDb" id="224308-BSU22770"/>
<dbReference type="EnsemblBacteria" id="CAB14193">
    <property type="protein sequence ID" value="CAB14193"/>
    <property type="gene ID" value="BSU_22770"/>
</dbReference>
<dbReference type="GeneID" id="92917493"/>
<dbReference type="GeneID" id="938996"/>
<dbReference type="KEGG" id="bsu:BSU22770"/>
<dbReference type="eggNOG" id="ENOG5032Z9Y">
    <property type="taxonomic scope" value="Bacteria"/>
</dbReference>
<dbReference type="InParanoid" id="P19466"/>
<dbReference type="OrthoDB" id="2111980at2"/>
<dbReference type="BioCyc" id="BSUB:BSU22770-MONOMER"/>
<dbReference type="EvolutionaryTrace" id="P19466"/>
<dbReference type="PRO" id="PR:P19466"/>
<dbReference type="Proteomes" id="UP000001570">
    <property type="component" value="Chromosome"/>
</dbReference>
<dbReference type="GO" id="GO:0003723">
    <property type="term" value="F:RNA binding"/>
    <property type="evidence" value="ECO:0007669"/>
    <property type="project" value="UniProtKB-UniRule"/>
</dbReference>
<dbReference type="GO" id="GO:0006353">
    <property type="term" value="P:DNA-templated transcription termination"/>
    <property type="evidence" value="ECO:0007669"/>
    <property type="project" value="InterPro"/>
</dbReference>
<dbReference type="GO" id="GO:0045947">
    <property type="term" value="P:negative regulation of translational initiation"/>
    <property type="evidence" value="ECO:0000314"/>
    <property type="project" value="CACAO"/>
</dbReference>
<dbReference type="GO" id="GO:0060566">
    <property type="term" value="P:positive regulation of termination of DNA-templated transcription"/>
    <property type="evidence" value="ECO:0000314"/>
    <property type="project" value="CACAO"/>
</dbReference>
<dbReference type="Gene3D" id="2.60.40.50">
    <property type="entry name" value="TRAP-like"/>
    <property type="match status" value="1"/>
</dbReference>
<dbReference type="HAMAP" id="MF_00798">
    <property type="entry name" value="Trp_attenuator"/>
    <property type="match status" value="1"/>
</dbReference>
<dbReference type="InterPro" id="IPR000824">
    <property type="entry name" value="MtrB"/>
</dbReference>
<dbReference type="InterPro" id="IPR016031">
    <property type="entry name" value="Trp_RNA-bd_attenuator-like_dom"/>
</dbReference>
<dbReference type="InterPro" id="IPR023558">
    <property type="entry name" value="Trp_RNA-bd_attenuator_dom"/>
</dbReference>
<dbReference type="NCBIfam" id="NF009724">
    <property type="entry name" value="PRK13251.1"/>
    <property type="match status" value="1"/>
</dbReference>
<dbReference type="Pfam" id="PF02081">
    <property type="entry name" value="TrpBP"/>
    <property type="match status" value="1"/>
</dbReference>
<dbReference type="PRINTS" id="PR00687">
    <property type="entry name" value="TRPRNAAP"/>
</dbReference>
<dbReference type="SUPFAM" id="SSF51219">
    <property type="entry name" value="TRAP-like"/>
    <property type="match status" value="1"/>
</dbReference>
<comment type="function">
    <text evidence="1 2">Required for transcription attenuation control in the trp operon. This trans-acting factor binds to trinucleotide repeats (GAG or UAG) located in the trp leader transcript causing transcription termination. Binds the leader RNA only in presence of L-tryptophan.</text>
</comment>
<comment type="subunit">
    <text>Oligomer of 11 identical subunits arranged in doughnut-like structure.</text>
</comment>
<comment type="similarity">
    <text evidence="3">Belongs to the MtrB family.</text>
</comment>
<proteinExistence type="evidence at protein level"/>
<protein>
    <recommendedName>
        <fullName>Transcription attenuation protein MtrB</fullName>
    </recommendedName>
    <alternativeName>
        <fullName>Trp RNA-binding attenuation protein</fullName>
        <shortName>TRAP</shortName>
    </alternativeName>
    <alternativeName>
        <fullName>Tryptophan RNA-binding attenuator protein</fullName>
    </alternativeName>
</protein>
<keyword id="KW-0002">3D-structure</keyword>
<keyword id="KW-1185">Reference proteome</keyword>
<keyword id="KW-0694">RNA-binding</keyword>
<keyword id="KW-0804">Transcription</keyword>
<keyword id="KW-0805">Transcription regulation</keyword>
<name>MTRB_BACSU</name>